<accession>P00785</accession>
<accession>A0A2R6QY08</accession>
<accession>A0A3G9DHM4</accession>
<accession>E5D7U1</accession>
<accession>E5D7U2</accession>
<accession>Q9AXD2</accession>
<name>ACTN_ACTCC</name>
<sequence length="380" mass="42098">MGLPKSFVSMSLLFFSTLLILSLAFNAKNLTQRTNDEVKAMYESWLIKYGKSYNSLGEWERRFEIFKETLRFIDEHNADTNRSYKVGLNQFADLTDEEFRSTYLGFTSGSNKTKVSNQYEPRVGQVLPSYVDWRSAGAVVDIKSQGECGGCWAFSAIATVEGINKIVTGVLISLSEQELIDCGRTQNTRGCNVGYITDGFQFIINNGGINTEENYPYTAQDGECNVDLQNEKYVTIDTYENVPYNNEWALQTAVTYQPVSVALDAAGDAFKHYSSGIFIGPCGTAIDHAVTIVGYGTEGGIDYWIVKNSWDTTWGEEGYMRILRNVGGAGTCGIATMPSYPVKYNNQNHPKSYSSLINPPAFSMSNDGPVGVDDGQRYSA</sequence>
<feature type="signal peptide" evidence="1">
    <location>
        <begin position="1"/>
        <end position="24"/>
    </location>
</feature>
<feature type="propeptide" id="PRO_0000026398" description="Activation peptide" evidence="6 7">
    <location>
        <begin position="25"/>
        <end position="126"/>
    </location>
</feature>
<feature type="chain" id="PRO_0000026399" description="Actinidain">
    <location>
        <begin position="127"/>
        <end position="380"/>
    </location>
</feature>
<feature type="active site" evidence="2 12 14">
    <location>
        <position position="151"/>
    </location>
</feature>
<feature type="active site" evidence="3">
    <location>
        <position position="288"/>
    </location>
</feature>
<feature type="active site" evidence="4">
    <location>
        <position position="308"/>
    </location>
</feature>
<feature type="binding site" description="covalent" evidence="5 14">
    <location>
        <position position="151"/>
    </location>
    <ligand>
        <name>E64</name>
        <dbReference type="ChEBI" id="CHEBI:192370"/>
        <note>inhibitor; produced by Aspergillus japonicus</note>
    </ligand>
</feature>
<feature type="disulfide bond" evidence="5 8 14 15">
    <location>
        <begin position="148"/>
        <end position="191"/>
    </location>
</feature>
<feature type="disulfide bond" evidence="5 8 14 15">
    <location>
        <begin position="182"/>
        <end position="224"/>
    </location>
</feature>
<feature type="disulfide bond" evidence="5 8 14 15">
    <location>
        <begin position="282"/>
        <end position="332"/>
    </location>
</feature>
<feature type="sequence conflict" description="In Ref. 1; ADQ85985." evidence="11" ref="1">
    <original>A</original>
    <variation>T</variation>
    <location>
        <position position="27"/>
    </location>
</feature>
<feature type="sequence conflict" description="In Ref. 5; CAA31435." evidence="11" ref="5">
    <original>D</original>
    <variation>G</variation>
    <location>
        <position position="96"/>
    </location>
</feature>
<feature type="sequence conflict" description="In Ref. 5; CAA31435." evidence="11" ref="5">
    <original>S</original>
    <variation>G</variation>
    <location>
        <position position="108"/>
    </location>
</feature>
<feature type="sequence conflict" description="In Ref. 1; ADQ85985/ADQ85986." evidence="11" ref="1">
    <original>Q</original>
    <variation>R</variation>
    <location>
        <position position="118"/>
    </location>
</feature>
<feature type="sequence conflict" description="In Ref. 5; CAA31435." evidence="11" ref="5">
    <original>G</original>
    <variation>S</variation>
    <location>
        <position position="124"/>
    </location>
</feature>
<feature type="sequence conflict" description="In Ref. 6; AA sequence." evidence="11" ref="6">
    <original>VTGV</original>
    <variation>TSGS</variation>
    <location>
        <begin position="167"/>
        <end position="170"/>
    </location>
</feature>
<feature type="sequence conflict" description="In Ref. 5; CAA31435." evidence="11" ref="5">
    <original>D</original>
    <variation>G</variation>
    <location>
        <position position="181"/>
    </location>
</feature>
<feature type="sequence conflict" description="In Ref. 5; CAA31435." evidence="11" ref="5">
    <original>R</original>
    <variation>G</variation>
    <location>
        <position position="184"/>
    </location>
</feature>
<feature type="sequence conflict" description="In Ref. 6; AA sequence." evidence="11" ref="6">
    <original>N</original>
    <variation>D</variation>
    <location>
        <position position="192"/>
    </location>
</feature>
<feature type="sequence conflict" description="In Ref. 1; ADQ85986." evidence="11" ref="1">
    <original>VG</original>
    <variation>GS</variation>
    <location>
        <begin position="193"/>
        <end position="194"/>
    </location>
</feature>
<feature type="sequence conflict" description="In Ref. 1; ADQ85985." evidence="11" ref="1">
    <original>V</original>
    <variation>G</variation>
    <location>
        <position position="193"/>
    </location>
</feature>
<feature type="sequence conflict" description="In Ref. 1; ADQ85986." evidence="11" ref="1">
    <original>Q</original>
    <variation>P</variation>
    <location>
        <position position="201"/>
    </location>
</feature>
<feature type="sequence conflict" description="In Ref. 6; AA sequence." evidence="11" ref="6">
    <original>N</original>
    <variation>D</variation>
    <location>
        <position position="206"/>
    </location>
</feature>
<feature type="sequence conflict" description="In Ref. 5; CAA31435." evidence="11" ref="5">
    <original>E</original>
    <variation>G</variation>
    <location>
        <position position="212"/>
    </location>
</feature>
<feature type="sequence conflict" description="In Ref. 6; AA sequence." evidence="11" ref="6">
    <original>E</original>
    <variation>D</variation>
    <location>
        <position position="223"/>
    </location>
</feature>
<feature type="sequence conflict" description="In Ref. 6; AA sequence." evidence="11" ref="6">
    <original>N</original>
    <variation>D</variation>
    <location>
        <position position="225"/>
    </location>
</feature>
<feature type="sequence conflict" description="In Ref. 5; CAA31435." evidence="11" ref="5">
    <original>V</original>
    <variation>L</variation>
    <location>
        <position position="226"/>
    </location>
</feature>
<feature type="sequence conflict" description="In Ref. 6; AA sequence." evidence="11" ref="6">
    <original>D</original>
    <variation>A</variation>
    <location>
        <position position="227"/>
    </location>
</feature>
<feature type="sequence conflict" description="In Ref. 6; AA sequence." evidence="11" ref="6">
    <original>NE</original>
    <variation>DQ</variation>
    <location>
        <begin position="230"/>
        <end position="231"/>
    </location>
</feature>
<feature type="sequence conflict" description="In Ref. 5; CAA31435." evidence="11" ref="5">
    <original>E</original>
    <variation>G</variation>
    <location>
        <position position="240"/>
    </location>
</feature>
<feature type="sequence conflict" description="In Ref. 1; ADQ85985/ADQ85986." evidence="11" ref="1">
    <original>H</original>
    <variation>Q</variation>
    <location>
        <position position="272"/>
    </location>
</feature>
<feature type="sequence conflict" description="In Ref. 6; AA sequence." evidence="11" ref="6">
    <original>S</original>
    <variation>A</variation>
    <location>
        <position position="274"/>
    </location>
</feature>
<feature type="sequence conflict" description="In Ref. 1; ADQ85985/ADQ85986." evidence="11" ref="1">
    <original>I</original>
    <variation>T</variation>
    <location>
        <position position="279"/>
    </location>
</feature>
<feature type="sequence conflict" description="In Ref. 6; AA sequence." evidence="11" ref="6">
    <original>VT</original>
    <variation>IV</variation>
    <location>
        <begin position="290"/>
        <end position="291"/>
    </location>
</feature>
<feature type="sequence conflict" description="In Ref. 6; AA sequence." evidence="11" ref="6">
    <original>I</original>
    <variation>V</variation>
    <location>
        <position position="301"/>
    </location>
</feature>
<feature type="sequence conflict" description="In Ref. 5; CAA31435." evidence="11" ref="5">
    <original>K</original>
    <variation>E</variation>
    <location>
        <position position="307"/>
    </location>
</feature>
<feature type="sequence conflict" description="In Ref. 5; CAA31435/CAA31529." evidence="11" ref="5">
    <original>H</original>
    <variation>Y</variation>
    <location>
        <position position="349"/>
    </location>
</feature>
<feature type="sequence conflict" description="In Ref. 5; CAA31435/CAA31529." evidence="11" ref="5">
    <original>P</original>
    <variation>S</variation>
    <location>
        <position position="360"/>
    </location>
</feature>
<feature type="sequence conflict" description="In Ref. 1; ADQ85985." evidence="11" ref="1">
    <original>N</original>
    <variation>K</variation>
    <location>
        <position position="366"/>
    </location>
</feature>
<feature type="sequence conflict" description="In Ref. 5; CAA31435/CAA31529." evidence="11" ref="5">
    <original>D</original>
    <variation>E</variation>
    <location>
        <position position="373"/>
    </location>
</feature>
<feature type="sequence conflict" description="In Ref. 5; CAA31529." evidence="11" ref="5">
    <original>D</original>
    <variation>H</variation>
    <location>
        <position position="374"/>
    </location>
</feature>
<feature type="helix" evidence="16">
    <location>
        <begin position="133"/>
        <end position="136"/>
    </location>
</feature>
<feature type="helix" evidence="16">
    <location>
        <begin position="151"/>
        <end position="168"/>
    </location>
</feature>
<feature type="helix" evidence="16">
    <location>
        <begin position="176"/>
        <end position="182"/>
    </location>
</feature>
<feature type="helix" evidence="16">
    <location>
        <begin position="190"/>
        <end position="192"/>
    </location>
</feature>
<feature type="helix" evidence="16">
    <location>
        <begin position="196"/>
        <end position="206"/>
    </location>
</feature>
<feature type="turn" evidence="16">
    <location>
        <begin position="212"/>
        <end position="214"/>
    </location>
</feature>
<feature type="helix" evidence="16">
    <location>
        <begin position="226"/>
        <end position="230"/>
    </location>
</feature>
<feature type="strand" evidence="16">
    <location>
        <begin position="238"/>
        <end position="241"/>
    </location>
</feature>
<feature type="helix" evidence="16">
    <location>
        <begin position="247"/>
        <end position="256"/>
    </location>
</feature>
<feature type="strand" evidence="16">
    <location>
        <begin position="259"/>
        <end position="263"/>
    </location>
</feature>
<feature type="helix" evidence="16">
    <location>
        <begin position="268"/>
        <end position="272"/>
    </location>
</feature>
<feature type="strand" evidence="16">
    <location>
        <begin position="275"/>
        <end position="278"/>
    </location>
</feature>
<feature type="strand" evidence="16">
    <location>
        <begin position="288"/>
        <end position="298"/>
    </location>
</feature>
<feature type="strand" evidence="16">
    <location>
        <begin position="301"/>
        <end position="307"/>
    </location>
</feature>
<feature type="strand" evidence="16">
    <location>
        <begin position="319"/>
        <end position="323"/>
    </location>
</feature>
<feature type="helix" evidence="16">
    <location>
        <begin position="331"/>
        <end position="333"/>
    </location>
</feature>
<feature type="strand" evidence="16">
    <location>
        <begin position="339"/>
        <end position="342"/>
    </location>
</feature>
<organism>
    <name type="scientific">Actinidia chinensis var. chinensis</name>
    <name type="common">Chinese soft-hair kiwi</name>
    <dbReference type="NCBI Taxonomy" id="1590841"/>
    <lineage>
        <taxon>Eukaryota</taxon>
        <taxon>Viridiplantae</taxon>
        <taxon>Streptophyta</taxon>
        <taxon>Embryophyta</taxon>
        <taxon>Tracheophyta</taxon>
        <taxon>Spermatophyta</taxon>
        <taxon>Magnoliopsida</taxon>
        <taxon>eudicotyledons</taxon>
        <taxon>Gunneridae</taxon>
        <taxon>Pentapetalae</taxon>
        <taxon>asterids</taxon>
        <taxon>Ericales</taxon>
        <taxon>Actinidiaceae</taxon>
        <taxon>Actinidia</taxon>
    </lineage>
</organism>
<dbReference type="EC" id="3.4.22.14" evidence="6"/>
<dbReference type="EMBL" id="GU201520">
    <property type="protein sequence ID" value="ADQ85985.1"/>
    <property type="molecule type" value="Genomic_DNA"/>
</dbReference>
<dbReference type="EMBL" id="GU201528">
    <property type="protein sequence ID" value="ADQ85986.1"/>
    <property type="molecule type" value="mRNA"/>
</dbReference>
<dbReference type="EMBL" id="LC330913">
    <property type="protein sequence ID" value="BBA83994.1"/>
    <property type="molecule type" value="Genomic_DNA"/>
</dbReference>
<dbReference type="EMBL" id="AF343446">
    <property type="protein sequence ID" value="AAK06862.1"/>
    <property type="molecule type" value="mRNA"/>
</dbReference>
<dbReference type="EMBL" id="NKQK01000011">
    <property type="protein sequence ID" value="PSS17271.1"/>
    <property type="molecule type" value="Genomic_DNA"/>
</dbReference>
<dbReference type="EMBL" id="X13013">
    <property type="protein sequence ID" value="CAA31435.1"/>
    <property type="status" value="ALT_FRAME"/>
    <property type="molecule type" value="mRNA"/>
</dbReference>
<dbReference type="EMBL" id="X13139">
    <property type="protein sequence ID" value="CAA31529.1"/>
    <property type="status" value="ALT_FRAME"/>
    <property type="molecule type" value="mRNA"/>
</dbReference>
<dbReference type="PDB" id="1AEC">
    <property type="method" value="X-ray"/>
    <property type="resolution" value="1.86 A"/>
    <property type="chains" value="A=127-344"/>
</dbReference>
<dbReference type="PDB" id="2ACT">
    <property type="method" value="X-ray"/>
    <property type="resolution" value="1.70 A"/>
    <property type="chains" value="A=127-346"/>
</dbReference>
<dbReference type="PDBsum" id="1AEC"/>
<dbReference type="PDBsum" id="2ACT"/>
<dbReference type="SMR" id="P00785"/>
<dbReference type="STRING" id="1590841.P00785"/>
<dbReference type="Allergome" id="1">
    <property type="allergen name" value="Act d 1"/>
</dbReference>
<dbReference type="Allergome" id="3052">
    <property type="allergen name" value="Act d 1.0101"/>
</dbReference>
<dbReference type="MEROPS" id="C01.007"/>
<dbReference type="MEROPS" id="I29.003"/>
<dbReference type="EnsemblPlants" id="PSS17271">
    <property type="protein sequence ID" value="PSS17271"/>
    <property type="gene ID" value="CEY00_Acc12058"/>
</dbReference>
<dbReference type="Gramene" id="PSS17271">
    <property type="protein sequence ID" value="PSS17271"/>
    <property type="gene ID" value="CEY00_Acc12058"/>
</dbReference>
<dbReference type="InParanoid" id="P00785"/>
<dbReference type="OMA" id="FEKWIAM"/>
<dbReference type="OrthoDB" id="10253408at2759"/>
<dbReference type="BRENDA" id="3.4.22.14">
    <property type="organism ID" value="120"/>
</dbReference>
<dbReference type="EvolutionaryTrace" id="P00785"/>
<dbReference type="Proteomes" id="UP000241394">
    <property type="component" value="Chromosome LG11"/>
</dbReference>
<dbReference type="GO" id="GO:0004197">
    <property type="term" value="F:cysteine-type endopeptidase activity"/>
    <property type="evidence" value="ECO:0007669"/>
    <property type="project" value="UniProtKB-EC"/>
</dbReference>
<dbReference type="GO" id="GO:0006508">
    <property type="term" value="P:proteolysis"/>
    <property type="evidence" value="ECO:0007669"/>
    <property type="project" value="UniProtKB-KW"/>
</dbReference>
<dbReference type="CDD" id="cd02248">
    <property type="entry name" value="Peptidase_C1A"/>
    <property type="match status" value="1"/>
</dbReference>
<dbReference type="FunFam" id="3.90.70.10:FF:000068">
    <property type="entry name" value="Cysteine protease 1"/>
    <property type="match status" value="1"/>
</dbReference>
<dbReference type="Gene3D" id="1.10.287.2250">
    <property type="match status" value="1"/>
</dbReference>
<dbReference type="Gene3D" id="3.90.70.10">
    <property type="entry name" value="Cysteine proteinases"/>
    <property type="match status" value="1"/>
</dbReference>
<dbReference type="InterPro" id="IPR038765">
    <property type="entry name" value="Papain-like_cys_pep_sf"/>
</dbReference>
<dbReference type="InterPro" id="IPR025661">
    <property type="entry name" value="Pept_asp_AS"/>
</dbReference>
<dbReference type="InterPro" id="IPR000169">
    <property type="entry name" value="Pept_cys_AS"/>
</dbReference>
<dbReference type="InterPro" id="IPR025660">
    <property type="entry name" value="Pept_his_AS"/>
</dbReference>
<dbReference type="InterPro" id="IPR013128">
    <property type="entry name" value="Peptidase_C1A"/>
</dbReference>
<dbReference type="InterPro" id="IPR000668">
    <property type="entry name" value="Peptidase_C1A_C"/>
</dbReference>
<dbReference type="InterPro" id="IPR039417">
    <property type="entry name" value="Peptidase_C1A_papain-like"/>
</dbReference>
<dbReference type="InterPro" id="IPR013201">
    <property type="entry name" value="Prot_inhib_I29"/>
</dbReference>
<dbReference type="PANTHER" id="PTHR12411">
    <property type="entry name" value="CYSTEINE PROTEASE FAMILY C1-RELATED"/>
    <property type="match status" value="1"/>
</dbReference>
<dbReference type="Pfam" id="PF08246">
    <property type="entry name" value="Inhibitor_I29"/>
    <property type="match status" value="1"/>
</dbReference>
<dbReference type="Pfam" id="PF00112">
    <property type="entry name" value="Peptidase_C1"/>
    <property type="match status" value="1"/>
</dbReference>
<dbReference type="PRINTS" id="PR00705">
    <property type="entry name" value="PAPAIN"/>
</dbReference>
<dbReference type="SMART" id="SM00848">
    <property type="entry name" value="Inhibitor_I29"/>
    <property type="match status" value="1"/>
</dbReference>
<dbReference type="SMART" id="SM00645">
    <property type="entry name" value="Pept_C1"/>
    <property type="match status" value="1"/>
</dbReference>
<dbReference type="SUPFAM" id="SSF54001">
    <property type="entry name" value="Cysteine proteinases"/>
    <property type="match status" value="1"/>
</dbReference>
<dbReference type="PROSITE" id="PS00640">
    <property type="entry name" value="THIOL_PROTEASE_ASN"/>
    <property type="match status" value="1"/>
</dbReference>
<dbReference type="PROSITE" id="PS00139">
    <property type="entry name" value="THIOL_PROTEASE_CYS"/>
    <property type="match status" value="1"/>
</dbReference>
<dbReference type="PROSITE" id="PS00639">
    <property type="entry name" value="THIOL_PROTEASE_HIS"/>
    <property type="match status" value="1"/>
</dbReference>
<reference key="1">
    <citation type="journal article" date="2012" name="Plant Physiol.">
        <title>Mapping, complementation, and targets of the cysteine protease actinidin in kiwifruit.</title>
        <authorList>
            <person name="Nieuwenhuizen N.J."/>
            <person name="Maddumage R."/>
            <person name="Tsang G.K."/>
            <person name="Fraser L.G."/>
            <person name="Cooney J.M."/>
            <person name="De Silva H.N."/>
            <person name="Green S."/>
            <person name="Richardson K.A."/>
            <person name="Atkinson R.G."/>
        </authorList>
    </citation>
    <scope>NUCLEOTIDE SEQUENCE [GENOMIC DNA / MRNA]</scope>
</reference>
<reference key="2">
    <citation type="journal article" date="2018" name="Hort. J.">
        <title>Differential constitution in promoter region leads to a phenotype with a lower allergic actinidin level in yellow-fleshed kiwifruit (Actinidia chinensis).</title>
        <authorList>
            <person name="Kamiyoshihara Y."/>
            <person name="Nakamura T."/>
            <person name="Itagaki Y."/>
            <person name="Asada S."/>
            <person name="Aoki T."/>
            <person name="Mizuno S."/>
            <person name="Watanabe K."/>
            <person name="Inoue H."/>
            <person name="Tateishi A."/>
        </authorList>
    </citation>
    <scope>NUCLEOTIDE SEQUENCE [GENOMIC DNA]</scope>
</reference>
<reference key="3">
    <citation type="submission" date="2001-01" db="EMBL/GenBank/DDBJ databases">
        <title>Isolation and expression in E. coli of actinidin gene from Chinese wild kiwifruit.</title>
        <authorList>
            <person name="Lee N.K."/>
            <person name="Hahm Y.T."/>
        </authorList>
    </citation>
    <scope>NUCLEOTIDE SEQUENCE [MRNA]</scope>
</reference>
<reference key="4">
    <citation type="journal article" date="2018" name="BMC Genomics">
        <title>A manually annotated Actinidia chinensis var. chinensis (kiwifruit) genome highlights the challenges associated with draft genomes and gene prediction in plants.</title>
        <authorList>
            <person name="Pilkington S.M."/>
            <person name="Crowhurst R."/>
            <person name="Hilario E."/>
            <person name="Nardozza S."/>
            <person name="Fraser L."/>
            <person name="Peng Y."/>
            <person name="Gunaseelan K."/>
            <person name="Simpson R."/>
            <person name="Tahir J."/>
            <person name="Deroles S.C."/>
            <person name="Templeton K."/>
            <person name="Luo Z."/>
            <person name="Davy M."/>
            <person name="Cheng C."/>
            <person name="McNeilage M."/>
            <person name="Scaglione D."/>
            <person name="Liu Y."/>
            <person name="Zhang Q."/>
            <person name="Datson P."/>
            <person name="De Silva N."/>
            <person name="Gardiner S.E."/>
            <person name="Bassett H."/>
            <person name="Chagne D."/>
            <person name="McCallum J."/>
            <person name="Dzierzon H."/>
            <person name="Deng C."/>
            <person name="Wang Y.Y."/>
            <person name="Barron L."/>
            <person name="Manako K."/>
            <person name="Bowen J."/>
            <person name="Foster T.M."/>
            <person name="Erridge Z.A."/>
            <person name="Tiffin H."/>
            <person name="Waite C.N."/>
            <person name="Davies K.M."/>
            <person name="Grierson E.P."/>
            <person name="Laing W.A."/>
            <person name="Kirk R."/>
            <person name="Chen X."/>
            <person name="Wood M."/>
            <person name="Montefiori M."/>
            <person name="Brummell D.A."/>
            <person name="Schwinn K.E."/>
            <person name="Catanach A."/>
            <person name="Fullerton C."/>
            <person name="Li D."/>
            <person name="Meiyalaghan S."/>
            <person name="Nieuwenhuizen N."/>
            <person name="Read N."/>
            <person name="Prakash R."/>
            <person name="Hunter D."/>
            <person name="Zhang H."/>
            <person name="McKenzie M."/>
            <person name="Knabel M."/>
            <person name="Harris A."/>
            <person name="Allan A.C."/>
            <person name="Gleave A."/>
            <person name="Chen A."/>
            <person name="Janssen B.J."/>
            <person name="Plunkett B."/>
            <person name="Ampomah-Dwamena C."/>
            <person name="Voogd C."/>
            <person name="Leif D."/>
            <person name="Lafferty D."/>
            <person name="Souleyre E.J.F."/>
            <person name="Varkonyi-Gasic E."/>
            <person name="Gambi F."/>
            <person name="Hanley J."/>
            <person name="Yao J.L."/>
            <person name="Cheung J."/>
            <person name="David K.M."/>
            <person name="Warren B."/>
            <person name="Marsh K."/>
            <person name="Snowden K.C."/>
            <person name="Lin-Wang K."/>
            <person name="Brian L."/>
            <person name="Martinez-Sanchez M."/>
            <person name="Wang M."/>
            <person name="Ileperuma N."/>
            <person name="Macnee N."/>
            <person name="Campin R."/>
            <person name="McAtee P."/>
            <person name="Drummond R.S.M."/>
            <person name="Espley R.V."/>
            <person name="Ireland H.S."/>
            <person name="Wu R."/>
            <person name="Atkinson R.G."/>
            <person name="Karunairetnam S."/>
            <person name="Bulley S."/>
            <person name="Chunkath S."/>
            <person name="Hanley Z."/>
            <person name="Storey R."/>
            <person name="Thrimawithana A.H."/>
            <person name="Thomson S."/>
            <person name="David C."/>
            <person name="Testolin R."/>
            <person name="Huang H."/>
            <person name="Hellens R.P."/>
            <person name="Schaffer R.J."/>
        </authorList>
    </citation>
    <scope>NUCLEOTIDE SEQUENCE [LARGE SCALE GENOMIC DNA]</scope>
    <source>
        <strain>cv. Red5</strain>
    </source>
</reference>
<reference key="5">
    <citation type="journal article" date="1988" name="Plant Mol. Biol.">
        <title>Molecular analysis of actinidin, the cysteine proteinase of Actinidia chinesis.</title>
        <authorList>
            <person name="Praekelt U.M."/>
            <person name="McKee R.A."/>
            <person name="Smith H."/>
        </authorList>
        <dbReference type="AGRICOLA" id="IND92000625"/>
    </citation>
    <scope>NUCLEOTIDE SEQUENCE [MRNA] OF 70-380</scope>
    <scope>TISSUE SPECIFICITY</scope>
    <scope>DEVELOPMENTAL STAGE</scope>
</reference>
<reference key="6">
    <citation type="journal article" date="1978" name="Biochem. J.">
        <title>The amino acid sequence of the tryptic peptides from actinidin, a proteolytic enzyme from the fruit of Actinidia chinensis.</title>
        <authorList>
            <person name="Carne A."/>
            <person name="Moore C.H."/>
        </authorList>
    </citation>
    <scope>PROTEIN SEQUENCE OF 127-346</scope>
</reference>
<reference key="7">
    <citation type="journal article" date="2008" name="J. Agric. Food Chem.">
        <title>Kiwellin, a modular protein from green and gold kiwi fruits: evidence of in vivo and in vitro processing and IgE binding.</title>
        <authorList>
            <person name="Tuppo L."/>
            <person name="Giangrieco I."/>
            <person name="Palazzo P."/>
            <person name="Bernardi M.L."/>
            <person name="Scala E."/>
            <person name="Carratore V."/>
            <person name="Tamburrini M."/>
            <person name="Mari A."/>
            <person name="Ciardiello M.A."/>
        </authorList>
    </citation>
    <scope>PROTEIN SEQUENCE OF 127-136</scope>
    <scope>FUNCTION</scope>
    <scope>CATALYTIC ACTIVITY</scope>
    <source>
        <strain>cv. Hort 16A</strain>
        <tissue>Fruit</tissue>
    </source>
</reference>
<reference key="8">
    <citation type="journal article" date="1980" name="J. Mol. Biol.">
        <title>Structure of actinidin, after refinement at 1.7-A resolution.</title>
        <authorList>
            <person name="Baker E.N."/>
        </authorList>
    </citation>
    <scope>X-RAY CRYSTALLOGRAPHY (1.70 ANGSTROMS) OF 127-346</scope>
    <scope>DISULFIDE BONDS</scope>
    <scope>SEQUENCE REVISION</scope>
</reference>
<reference key="9">
    <citation type="journal article" date="1992" name="Biochemistry">
        <title>Crystal structure of an actinidin-E-64 complex.</title>
        <authorList>
            <person name="Varughese K.I."/>
            <person name="Su Y."/>
            <person name="Cromwell D."/>
            <person name="Hasnain S."/>
            <person name="Xuong N.H."/>
        </authorList>
    </citation>
    <scope>X-RAY CRYSTALLOGRAPHY (1.86 ANGSTROMS) OF 127-344 IN COMPLEX WITH E64</scope>
    <scope>DISULFIDE BONDS</scope>
    <scope>ACTIVITY REGULATION</scope>
</reference>
<evidence type="ECO:0000255" key="1"/>
<evidence type="ECO:0000255" key="2">
    <source>
        <dbReference type="PROSITE-ProRule" id="PRU10088"/>
    </source>
</evidence>
<evidence type="ECO:0000255" key="3">
    <source>
        <dbReference type="PROSITE-ProRule" id="PRU10089"/>
    </source>
</evidence>
<evidence type="ECO:0000255" key="4">
    <source>
        <dbReference type="PROSITE-ProRule" id="PRU10090"/>
    </source>
</evidence>
<evidence type="ECO:0000269" key="5">
    <source>
    </source>
</evidence>
<evidence type="ECO:0000269" key="6">
    <source>
    </source>
</evidence>
<evidence type="ECO:0000269" key="7">
    <source>
    </source>
</evidence>
<evidence type="ECO:0000269" key="8">
    <source>
    </source>
</evidence>
<evidence type="ECO:0000269" key="9">
    <source ref="5"/>
</evidence>
<evidence type="ECO:0000303" key="10">
    <source>
    </source>
</evidence>
<evidence type="ECO:0000305" key="11"/>
<evidence type="ECO:0000305" key="12">
    <source>
    </source>
</evidence>
<evidence type="ECO:0000312" key="13">
    <source>
        <dbReference type="EMBL" id="PSS17271.1"/>
    </source>
</evidence>
<evidence type="ECO:0007744" key="14">
    <source>
        <dbReference type="PDB" id="1AEC"/>
    </source>
</evidence>
<evidence type="ECO:0007744" key="15">
    <source>
        <dbReference type="PDB" id="2ACT"/>
    </source>
</evidence>
<evidence type="ECO:0007829" key="16">
    <source>
        <dbReference type="PDB" id="2ACT"/>
    </source>
</evidence>
<proteinExistence type="evidence at protein level"/>
<gene>
    <name evidence="10" type="primary">ACT1A</name>
    <name evidence="13" type="ORF">CEY00_Acc12058</name>
</gene>
<protein>
    <recommendedName>
        <fullName>Actinidain</fullName>
        <shortName>Actinidin</shortName>
        <ecNumber evidence="6">3.4.22.14</ecNumber>
    </recommendedName>
    <allergenName>Act c 1</allergenName>
</protein>
<comment type="function">
    <text evidence="6">Cysteine protease responsible for the cleavage of kiwellin into kissper and KiTH.</text>
</comment>
<comment type="catalytic activity">
    <reaction evidence="6">
        <text>Specificity close to that of papain.</text>
        <dbReference type="EC" id="3.4.22.14"/>
    </reaction>
</comment>
<comment type="activity regulation">
    <text evidence="5">Repressed by the active-site-directed cysteine protease inhibitor E64 (L-trans-epoxysuccinyl-leucylamide-(4-guanido)-butane) produced by Aspergillus japonicus.</text>
</comment>
<comment type="tissue specificity">
    <text evidence="9">Fruit.</text>
</comment>
<comment type="developmental stage">
    <text evidence="9">Levels of mRNA accumulate during early fruit development.</text>
</comment>
<comment type="allergen">
    <text>Causes an allergic reaction in human.</text>
</comment>
<comment type="similarity">
    <text evidence="2 3 4">Belongs to the peptidase C1 family.</text>
</comment>
<comment type="sequence caution" evidence="11">
    <conflict type="frameshift">
        <sequence resource="EMBL-CDS" id="CAA31435"/>
    </conflict>
</comment>
<comment type="sequence caution" evidence="11">
    <conflict type="frameshift">
        <sequence resource="EMBL-CDS" id="CAA31529"/>
    </conflict>
</comment>
<keyword id="KW-0002">3D-structure</keyword>
<keyword id="KW-0020">Allergen</keyword>
<keyword id="KW-0903">Direct protein sequencing</keyword>
<keyword id="KW-1015">Disulfide bond</keyword>
<keyword id="KW-0378">Hydrolase</keyword>
<keyword id="KW-0645">Protease</keyword>
<keyword id="KW-1185">Reference proteome</keyword>
<keyword id="KW-0732">Signal</keyword>
<keyword id="KW-0788">Thiol protease</keyword>
<keyword id="KW-0865">Zymogen</keyword>